<protein>
    <recommendedName>
        <fullName evidence="1">Small ribosomal subunit protein uS8</fullName>
    </recommendedName>
    <alternativeName>
        <fullName evidence="2">30S ribosomal protein S8</fullName>
    </alternativeName>
</protein>
<proteinExistence type="inferred from homology"/>
<reference key="1">
    <citation type="submission" date="2006-08" db="EMBL/GenBank/DDBJ databases">
        <title>Complete sequence of Maricaulis maris MCS10.</title>
        <authorList>
            <consortium name="US DOE Joint Genome Institute"/>
            <person name="Copeland A."/>
            <person name="Lucas S."/>
            <person name="Lapidus A."/>
            <person name="Barry K."/>
            <person name="Detter J.C."/>
            <person name="Glavina del Rio T."/>
            <person name="Hammon N."/>
            <person name="Israni S."/>
            <person name="Dalin E."/>
            <person name="Tice H."/>
            <person name="Pitluck S."/>
            <person name="Saunders E."/>
            <person name="Brettin T."/>
            <person name="Bruce D."/>
            <person name="Han C."/>
            <person name="Tapia R."/>
            <person name="Gilna P."/>
            <person name="Schmutz J."/>
            <person name="Larimer F."/>
            <person name="Land M."/>
            <person name="Hauser L."/>
            <person name="Kyrpides N."/>
            <person name="Mikhailova N."/>
            <person name="Viollier P."/>
            <person name="Stephens C."/>
            <person name="Richardson P."/>
        </authorList>
    </citation>
    <scope>NUCLEOTIDE SEQUENCE [LARGE SCALE GENOMIC DNA]</scope>
    <source>
        <strain>MCS10</strain>
    </source>
</reference>
<comment type="function">
    <text evidence="1">One of the primary rRNA binding proteins, it binds directly to 16S rRNA central domain where it helps coordinate assembly of the platform of the 30S subunit.</text>
</comment>
<comment type="subunit">
    <text evidence="1">Part of the 30S ribosomal subunit. Contacts proteins S5 and S12.</text>
</comment>
<comment type="similarity">
    <text evidence="1">Belongs to the universal ribosomal protein uS8 family.</text>
</comment>
<feature type="chain" id="PRO_0000290872" description="Small ribosomal subunit protein uS8">
    <location>
        <begin position="1"/>
        <end position="132"/>
    </location>
</feature>
<dbReference type="EMBL" id="CP000449">
    <property type="protein sequence ID" value="ABI66073.1"/>
    <property type="molecule type" value="Genomic_DNA"/>
</dbReference>
<dbReference type="RefSeq" id="WP_011643719.1">
    <property type="nucleotide sequence ID" value="NC_008347.1"/>
</dbReference>
<dbReference type="SMR" id="Q0ANR4"/>
<dbReference type="STRING" id="394221.Mmar10_1781"/>
<dbReference type="KEGG" id="mmr:Mmar10_1781"/>
<dbReference type="eggNOG" id="COG0096">
    <property type="taxonomic scope" value="Bacteria"/>
</dbReference>
<dbReference type="HOGENOM" id="CLU_098428_0_0_5"/>
<dbReference type="OrthoDB" id="9802617at2"/>
<dbReference type="Proteomes" id="UP000001964">
    <property type="component" value="Chromosome"/>
</dbReference>
<dbReference type="GO" id="GO:1990904">
    <property type="term" value="C:ribonucleoprotein complex"/>
    <property type="evidence" value="ECO:0007669"/>
    <property type="project" value="UniProtKB-KW"/>
</dbReference>
<dbReference type="GO" id="GO:0005840">
    <property type="term" value="C:ribosome"/>
    <property type="evidence" value="ECO:0007669"/>
    <property type="project" value="UniProtKB-KW"/>
</dbReference>
<dbReference type="GO" id="GO:0019843">
    <property type="term" value="F:rRNA binding"/>
    <property type="evidence" value="ECO:0007669"/>
    <property type="project" value="UniProtKB-UniRule"/>
</dbReference>
<dbReference type="GO" id="GO:0003735">
    <property type="term" value="F:structural constituent of ribosome"/>
    <property type="evidence" value="ECO:0007669"/>
    <property type="project" value="InterPro"/>
</dbReference>
<dbReference type="GO" id="GO:0006412">
    <property type="term" value="P:translation"/>
    <property type="evidence" value="ECO:0007669"/>
    <property type="project" value="UniProtKB-UniRule"/>
</dbReference>
<dbReference type="FunFam" id="3.30.1370.30:FF:000002">
    <property type="entry name" value="30S ribosomal protein S8"/>
    <property type="match status" value="1"/>
</dbReference>
<dbReference type="FunFam" id="3.30.1490.10:FF:000001">
    <property type="entry name" value="30S ribosomal protein S8"/>
    <property type="match status" value="1"/>
</dbReference>
<dbReference type="Gene3D" id="3.30.1370.30">
    <property type="match status" value="1"/>
</dbReference>
<dbReference type="Gene3D" id="3.30.1490.10">
    <property type="match status" value="1"/>
</dbReference>
<dbReference type="HAMAP" id="MF_01302_B">
    <property type="entry name" value="Ribosomal_uS8_B"/>
    <property type="match status" value="1"/>
</dbReference>
<dbReference type="InterPro" id="IPR000630">
    <property type="entry name" value="Ribosomal_uS8"/>
</dbReference>
<dbReference type="InterPro" id="IPR047863">
    <property type="entry name" value="Ribosomal_uS8_CS"/>
</dbReference>
<dbReference type="InterPro" id="IPR035987">
    <property type="entry name" value="Ribosomal_uS8_sf"/>
</dbReference>
<dbReference type="NCBIfam" id="NF001109">
    <property type="entry name" value="PRK00136.1"/>
    <property type="match status" value="1"/>
</dbReference>
<dbReference type="PANTHER" id="PTHR11758">
    <property type="entry name" value="40S RIBOSOMAL PROTEIN S15A"/>
    <property type="match status" value="1"/>
</dbReference>
<dbReference type="Pfam" id="PF00410">
    <property type="entry name" value="Ribosomal_S8"/>
    <property type="match status" value="1"/>
</dbReference>
<dbReference type="SUPFAM" id="SSF56047">
    <property type="entry name" value="Ribosomal protein S8"/>
    <property type="match status" value="1"/>
</dbReference>
<dbReference type="PROSITE" id="PS00053">
    <property type="entry name" value="RIBOSOMAL_S8"/>
    <property type="match status" value="1"/>
</dbReference>
<sequence>MSVNDPLGDMLTRIRNALMRNKRAVNTPASALRRRVLDVLKSEGYIRDYAEVEHASGLKEFEIELKYFEGDSVISEIKRISKPGRRVYSGVKDLPLVQNGLGIAILSTPKGVMSDSTARESNVGGEILCHVS</sequence>
<name>RS8_MARMM</name>
<keyword id="KW-1185">Reference proteome</keyword>
<keyword id="KW-0687">Ribonucleoprotein</keyword>
<keyword id="KW-0689">Ribosomal protein</keyword>
<keyword id="KW-0694">RNA-binding</keyword>
<keyword id="KW-0699">rRNA-binding</keyword>
<organism>
    <name type="scientific">Maricaulis maris (strain MCS10)</name>
    <name type="common">Caulobacter maris</name>
    <dbReference type="NCBI Taxonomy" id="394221"/>
    <lineage>
        <taxon>Bacteria</taxon>
        <taxon>Pseudomonadati</taxon>
        <taxon>Pseudomonadota</taxon>
        <taxon>Alphaproteobacteria</taxon>
        <taxon>Maricaulales</taxon>
        <taxon>Maricaulaceae</taxon>
        <taxon>Maricaulis</taxon>
    </lineage>
</organism>
<gene>
    <name evidence="1" type="primary">rpsH</name>
    <name type="ordered locus">Mmar10_1781</name>
</gene>
<accession>Q0ANR4</accession>
<evidence type="ECO:0000255" key="1">
    <source>
        <dbReference type="HAMAP-Rule" id="MF_01302"/>
    </source>
</evidence>
<evidence type="ECO:0000305" key="2"/>